<evidence type="ECO:0000250" key="1"/>
<evidence type="ECO:0000255" key="2"/>
<evidence type="ECO:0000255" key="3">
    <source>
        <dbReference type="PROSITE-ProRule" id="PRU00076"/>
    </source>
</evidence>
<evidence type="ECO:0000255" key="4">
    <source>
        <dbReference type="PROSITE-ProRule" id="PRU00298"/>
    </source>
</evidence>
<evidence type="ECO:0000255" key="5">
    <source>
        <dbReference type="PROSITE-ProRule" id="PRU00302"/>
    </source>
</evidence>
<evidence type="ECO:0000269" key="6">
    <source>
    </source>
</evidence>
<evidence type="ECO:0000269" key="7">
    <source>
    </source>
</evidence>
<evidence type="ECO:0000269" key="8">
    <source>
    </source>
</evidence>
<evidence type="ECO:0000269" key="9">
    <source>
    </source>
</evidence>
<organism>
    <name type="scientific">Sus scrofa</name>
    <name type="common">Pig</name>
    <dbReference type="NCBI Taxonomy" id="9823"/>
    <lineage>
        <taxon>Eukaryota</taxon>
        <taxon>Metazoa</taxon>
        <taxon>Chordata</taxon>
        <taxon>Craniata</taxon>
        <taxon>Vertebrata</taxon>
        <taxon>Euteleostomi</taxon>
        <taxon>Mammalia</taxon>
        <taxon>Eutheria</taxon>
        <taxon>Laurasiatheria</taxon>
        <taxon>Artiodactyla</taxon>
        <taxon>Suina</taxon>
        <taxon>Suidae</taxon>
        <taxon>Sus</taxon>
    </lineage>
</organism>
<gene>
    <name type="primary">TPO</name>
</gene>
<keyword id="KW-0106">Calcium</keyword>
<keyword id="KW-0903">Direct protein sequencing</keyword>
<keyword id="KW-1015">Disulfide bond</keyword>
<keyword id="KW-0245">EGF-like domain</keyword>
<keyword id="KW-0325">Glycoprotein</keyword>
<keyword id="KW-0349">Heme</keyword>
<keyword id="KW-0376">Hydrogen peroxide</keyword>
<keyword id="KW-0408">Iron</keyword>
<keyword id="KW-0472">Membrane</keyword>
<keyword id="KW-0479">Metal-binding</keyword>
<keyword id="KW-0560">Oxidoreductase</keyword>
<keyword id="KW-0575">Peroxidase</keyword>
<keyword id="KW-1185">Reference proteome</keyword>
<keyword id="KW-0732">Signal</keyword>
<keyword id="KW-0768">Sushi</keyword>
<keyword id="KW-0893">Thyroid hormones biosynthesis</keyword>
<keyword id="KW-0812">Transmembrane</keyword>
<keyword id="KW-1133">Transmembrane helix</keyword>
<feature type="signal peptide" evidence="2">
    <location>
        <begin position="1"/>
        <end position="14"/>
    </location>
</feature>
<feature type="chain" id="PRO_0000023664" description="Thyroid peroxidase">
    <location>
        <begin position="15"/>
        <end position="926"/>
    </location>
</feature>
<feature type="topological domain" description="Extracellular" evidence="2">
    <location>
        <begin position="19"/>
        <end position="844"/>
    </location>
</feature>
<feature type="transmembrane region" description="Helical" evidence="2">
    <location>
        <begin position="845"/>
        <end position="869"/>
    </location>
</feature>
<feature type="topological domain" description="Cytoplasmic" evidence="2">
    <location>
        <begin position="870"/>
        <end position="926"/>
    </location>
</feature>
<feature type="domain" description="Sushi" evidence="5">
    <location>
        <begin position="738"/>
        <end position="793"/>
    </location>
</feature>
<feature type="domain" description="EGF-like; calcium-binding" evidence="3">
    <location>
        <begin position="794"/>
        <end position="837"/>
    </location>
</feature>
<feature type="active site" description="Proton acceptor" evidence="4">
    <location>
        <position position="239"/>
    </location>
</feature>
<feature type="binding site" description="covalent" evidence="1">
    <location>
        <position position="238"/>
    </location>
    <ligand>
        <name>heme b</name>
        <dbReference type="ChEBI" id="CHEBI:60344"/>
    </ligand>
</feature>
<feature type="binding site" evidence="4">
    <location>
        <position position="240"/>
    </location>
    <ligand>
        <name>Ca(2+)</name>
        <dbReference type="ChEBI" id="CHEBI:29108"/>
    </ligand>
</feature>
<feature type="binding site" evidence="4">
    <location>
        <position position="321"/>
    </location>
    <ligand>
        <name>Ca(2+)</name>
        <dbReference type="ChEBI" id="CHEBI:29108"/>
    </ligand>
</feature>
<feature type="binding site" evidence="4">
    <location>
        <position position="323"/>
    </location>
    <ligand>
        <name>Ca(2+)</name>
        <dbReference type="ChEBI" id="CHEBI:29108"/>
    </ligand>
</feature>
<feature type="binding site" evidence="4">
    <location>
        <position position="325"/>
    </location>
    <ligand>
        <name>Ca(2+)</name>
        <dbReference type="ChEBI" id="CHEBI:29108"/>
    </ligand>
</feature>
<feature type="binding site" evidence="4">
    <location>
        <position position="327"/>
    </location>
    <ligand>
        <name>Ca(2+)</name>
        <dbReference type="ChEBI" id="CHEBI:29108"/>
    </ligand>
</feature>
<feature type="binding site" description="covalent" evidence="1">
    <location>
        <position position="398"/>
    </location>
    <ligand>
        <name>heme b</name>
        <dbReference type="ChEBI" id="CHEBI:60344"/>
    </ligand>
</feature>
<feature type="binding site" description="axial binding residue" evidence="4">
    <location>
        <position position="493"/>
    </location>
    <ligand>
        <name>heme b</name>
        <dbReference type="ChEBI" id="CHEBI:60344"/>
    </ligand>
    <ligandPart>
        <name>Fe</name>
        <dbReference type="ChEBI" id="CHEBI:18248"/>
    </ligandPart>
</feature>
<feature type="site" description="Transition state stabilizer" evidence="4">
    <location>
        <position position="395"/>
    </location>
</feature>
<feature type="glycosylation site" description="N-linked (GlcNAc...) asparagine" evidence="7">
    <location>
        <position position="129"/>
    </location>
</feature>
<feature type="glycosylation site" description="N-linked (GlcNAc...) asparagine" evidence="7">
    <location>
        <position position="277"/>
    </location>
</feature>
<feature type="glycosylation site" description="N-linked (GlcNAc...) asparagine" evidence="7">
    <location>
        <position position="307"/>
    </location>
</feature>
<feature type="glycosylation site" description="N-linked (GlcNAc...) asparagine" evidence="7">
    <location>
        <position position="342"/>
    </location>
</feature>
<feature type="disulfide bond" evidence="1">
    <location>
        <begin position="142"/>
        <end position="158"/>
    </location>
</feature>
<feature type="disulfide bond" evidence="1">
    <location>
        <begin position="259"/>
        <end position="269"/>
    </location>
</feature>
<feature type="disulfide bond" evidence="1">
    <location>
        <begin position="263"/>
        <end position="286"/>
    </location>
</feature>
<feature type="disulfide bond" evidence="1">
    <location>
        <begin position="596"/>
        <end position="653"/>
    </location>
</feature>
<feature type="disulfide bond" evidence="1">
    <location>
        <begin position="694"/>
        <end position="719"/>
    </location>
</feature>
<feature type="disulfide bond" evidence="1">
    <location>
        <begin position="740"/>
        <end position="780"/>
    </location>
</feature>
<feature type="disulfide bond" evidence="1">
    <location>
        <begin position="766"/>
        <end position="792"/>
    </location>
</feature>
<feature type="disulfide bond" evidence="1">
    <location>
        <begin position="798"/>
        <end position="812"/>
    </location>
</feature>
<feature type="disulfide bond" evidence="1">
    <location>
        <begin position="806"/>
        <end position="821"/>
    </location>
</feature>
<feature type="disulfide bond" evidence="1">
    <location>
        <begin position="823"/>
        <end position="836"/>
    </location>
</feature>
<sequence>MGARAVLGVTLAVACAGAFFASILRRKDLLGGDTEASGVAGLVEASRLLVDEAIHTTMRRNLRKRGIFSPSQLLSFSKLPEPTSRTASRAAEIMETAVQEVKRRVCRRRDTDQLPTDVLSEELLSTIANLSGCLPHMLPPSCPHTCLANKYRLITGACNNRDHPRWGASNTALARWLPPAYEDGVTEPRGWNPHFLYNGLPLPPVREVTRQVIHVSNEAVTEDGQYSDLLMAWGQYIDHDIAFTPQSTSKAAFAGGADCQLTCENRSPCFPIQLPTNASGAAGATCLPFYRSSAACGSGRQGALVGNLSWAAPRQQMNGLTSFLDASTVYGSSPAQEQRLRNWTSAEGLLRVNTRHRDAGRAFLPFAPPPAPPACAPEPGTPAARAPCFLAGDSRASEVPGLTALHTLWLREHNRLAAAFKALNAHWSADTVYQEARKVVGALHQIVTLRDYVPKILGAEAFGQHVGPYQGYDPAVDPTVSNVFSTAAFRFGHATIHPLVRRLDARFQEHPGSHLPLRAAFFQPWRLLREGGVDPVLRGLLARPAKLQVQDQLMNEELTERLFVLSNSGTLDLASINLQRGRDHGLPGYNEWREFCGLSRLETWADLSAATANGRVADRILGLYQHPDNIDVWLGGLAESFLPGARTGPLFACIIGKQMRALRDGDRFWWENPGVFTEAQRRELSRHSMSRVICDNSGLSHVPLDAFRVGQWPQEFEPCASIQGMDLGAWREAPPSGDACGFPDPVEDGGFLLCEERGQRVLVFSCRHGFRLRGPAQITCTPRGWDSPPPLCKDINECEDETDPPCHASARCKNTKGGVLCECSDPLVLGEDGRTCVDAGRLPRASVVSIALGAVLVCGLAGLAWTVVCRWTHADARPLLPVGEGEGDGKSPSLPLPGCGNRRDVGAAPALEVEQDLSCGSRGLCE</sequence>
<proteinExistence type="evidence at protein level"/>
<reference key="1">
    <citation type="journal article" date="1987" name="J. Biol. Chem.">
        <title>Molecular cloning of the structural gene for porcine thyroid peroxidase.</title>
        <authorList>
            <person name="Magnusson R.P."/>
            <person name="Gestautas J."/>
            <person name="Taurog A."/>
            <person name="Rapoport B."/>
        </authorList>
    </citation>
    <scope>NUCLEOTIDE SEQUENCE [MRNA]</scope>
</reference>
<reference key="2">
    <citation type="journal article" date="1986" name="FEBS Lett.">
        <title>Isolation and characterization of a cDNA clone for porcine thyroid peroxidase.</title>
        <authorList>
            <person name="Magnusson R.P."/>
            <person name="Gestautas J."/>
            <person name="Seto P."/>
            <person name="Taurog A."/>
            <person name="Rapoport B."/>
        </authorList>
    </citation>
    <scope>NUCLEOTIDE SEQUENCE [MRNA] OF 595-926</scope>
</reference>
<reference key="3">
    <citation type="journal article" date="1992" name="Arch. Biochem. Biophys.">
        <title>Thyroid peroxidase glycosylation: the location and nature of the N-linked oligosaccharide units in porcine thyroid peroxidase.</title>
        <authorList>
            <person name="Rawitch A.B."/>
            <person name="Pollock G."/>
            <person name="Yang S.-X."/>
            <person name="Taurog A."/>
        </authorList>
    </citation>
    <scope>PROTEIN SEQUENCE OF 110-115; 267-274; 301-308 AND 340-351</scope>
    <scope>GLYCOSYLATION AT ASN-129; ASN-277; ASN-307 AND ASN-342</scope>
</reference>
<reference key="4">
    <citation type="journal article" date="1967" name="J. Biol. Chem.">
        <title>Purification and iodinating activity of hog thyroid peroxidase.</title>
        <authorList>
            <person name="Coval M.L."/>
            <person name="Taurog A."/>
        </authorList>
    </citation>
    <scope>FUNCTION</scope>
    <scope>CATALYTIC ACTIVITY</scope>
</reference>
<reference key="5">
    <citation type="journal article" date="1982" name="J. Biol. Chem.">
        <title>One- and two-electron oxidations of tyrosine, monoiodotyrosine, and diiodotyrosine catalyzed by hog thyroid peroxidase.</title>
        <authorList>
            <person name="Ohtaki S."/>
            <person name="Nakagawa H."/>
            <person name="Nakamura M."/>
            <person name="Yamazaki I."/>
        </authorList>
    </citation>
    <scope>CATALYTIC ACTIVITY</scope>
    <scope>CHARACTERIZATION</scope>
</reference>
<reference key="6">
    <citation type="journal article" date="1985" name="Arch. Biochem. Biophys.">
        <title>Spectral characteristics and catalytic properties of thyroid peroxidase-H2O2 compounds in the iodination and coupling reactions.</title>
        <authorList>
            <person name="Virion A."/>
            <person name="Courtin F."/>
            <person name="Deme D."/>
            <person name="Michot J.L."/>
            <person name="Kaniewski J."/>
            <person name="Pommier J."/>
        </authorList>
    </citation>
    <scope>FUNCTION</scope>
    <scope>CATALYTIC ACTIVITY</scope>
    <scope>CHARACTERIZATION</scope>
</reference>
<comment type="function">
    <text evidence="6 8">Iodination and coupling of the hormonogenic tyrosines in thyroglobulin to yield the thyroid hormones T(3) and T(4).</text>
</comment>
<comment type="catalytic activity">
    <reaction evidence="6 8 9">
        <text>2 iodide + H2O2 + 2 H(+) = diiodine + 2 H2O</text>
        <dbReference type="Rhea" id="RHEA:23336"/>
        <dbReference type="ChEBI" id="CHEBI:15377"/>
        <dbReference type="ChEBI" id="CHEBI:15378"/>
        <dbReference type="ChEBI" id="CHEBI:16240"/>
        <dbReference type="ChEBI" id="CHEBI:16382"/>
        <dbReference type="ChEBI" id="CHEBI:17606"/>
        <dbReference type="EC" id="1.11.1.8"/>
    </reaction>
</comment>
<comment type="catalytic activity">
    <reaction evidence="6 8 9">
        <text>[thyroglobulin]-L-tyrosine + iodide + H2O2 + H(+) = [thyroglobulin]-3-iodo-L-tyrosine + 2 H2O</text>
        <dbReference type="Rhea" id="RHEA:48956"/>
        <dbReference type="Rhea" id="RHEA-COMP:12274"/>
        <dbReference type="Rhea" id="RHEA-COMP:12275"/>
        <dbReference type="ChEBI" id="CHEBI:15377"/>
        <dbReference type="ChEBI" id="CHEBI:15378"/>
        <dbReference type="ChEBI" id="CHEBI:16240"/>
        <dbReference type="ChEBI" id="CHEBI:16382"/>
        <dbReference type="ChEBI" id="CHEBI:46858"/>
        <dbReference type="ChEBI" id="CHEBI:90870"/>
        <dbReference type="EC" id="1.11.1.8"/>
    </reaction>
</comment>
<comment type="catalytic activity">
    <reaction evidence="6 8 9">
        <text>[thyroglobulin]-3-iodo-L-tyrosine + iodide + H2O2 + H(+) = [thyroglobulin]-3,5-diiodo-L-tyrosine + 2 H2O</text>
        <dbReference type="Rhea" id="RHEA:48960"/>
        <dbReference type="Rhea" id="RHEA-COMP:12275"/>
        <dbReference type="Rhea" id="RHEA-COMP:12276"/>
        <dbReference type="ChEBI" id="CHEBI:15377"/>
        <dbReference type="ChEBI" id="CHEBI:15378"/>
        <dbReference type="ChEBI" id="CHEBI:16240"/>
        <dbReference type="ChEBI" id="CHEBI:16382"/>
        <dbReference type="ChEBI" id="CHEBI:90870"/>
        <dbReference type="ChEBI" id="CHEBI:90871"/>
        <dbReference type="EC" id="1.11.1.8"/>
    </reaction>
</comment>
<comment type="catalytic activity">
    <reaction evidence="6 8 9">
        <text>2 [thyroglobulin]-3,5-diiodo-L-tyrosine + H2O2 = [thyroglobulin]-L-thyroxine + [thyroglobulin]-dehydroalanine + 2 H2O</text>
        <dbReference type="Rhea" id="RHEA:48964"/>
        <dbReference type="Rhea" id="RHEA-COMP:12276"/>
        <dbReference type="Rhea" id="RHEA-COMP:12277"/>
        <dbReference type="Rhea" id="RHEA-COMP:12278"/>
        <dbReference type="ChEBI" id="CHEBI:15377"/>
        <dbReference type="ChEBI" id="CHEBI:16240"/>
        <dbReference type="ChEBI" id="CHEBI:90871"/>
        <dbReference type="ChEBI" id="CHEBI:90872"/>
        <dbReference type="ChEBI" id="CHEBI:90873"/>
        <dbReference type="EC" id="1.11.1.8"/>
    </reaction>
</comment>
<comment type="catalytic activity">
    <reaction evidence="6 8 9">
        <text>[thyroglobulin]-3-iodo-L-tyrosine + [thyroglobulin]-3,5-diiodo-L-tyrosine + H2O2 = [thyroglobulin]-3,3',5-triiodo-L-thyronine + [thyroglobulin]-dehydroalanine + 2 H2O</text>
        <dbReference type="Rhea" id="RHEA:48968"/>
        <dbReference type="Rhea" id="RHEA-COMP:12275"/>
        <dbReference type="Rhea" id="RHEA-COMP:12276"/>
        <dbReference type="Rhea" id="RHEA-COMP:12278"/>
        <dbReference type="Rhea" id="RHEA-COMP:12279"/>
        <dbReference type="ChEBI" id="CHEBI:15377"/>
        <dbReference type="ChEBI" id="CHEBI:16240"/>
        <dbReference type="ChEBI" id="CHEBI:90870"/>
        <dbReference type="ChEBI" id="CHEBI:90871"/>
        <dbReference type="ChEBI" id="CHEBI:90873"/>
        <dbReference type="ChEBI" id="CHEBI:90874"/>
        <dbReference type="EC" id="1.11.1.8"/>
    </reaction>
</comment>
<comment type="cofactor">
    <cofactor evidence="4">
        <name>Ca(2+)</name>
        <dbReference type="ChEBI" id="CHEBI:29108"/>
    </cofactor>
    <text evidence="4">Binds 1 Ca(2+) ion per heterodimer.</text>
</comment>
<comment type="cofactor">
    <cofactor evidence="4">
        <name>heme b</name>
        <dbReference type="ChEBI" id="CHEBI:60344"/>
    </cofactor>
    <text evidence="4">Binds 1 heme b (iron(II)-protoporphyrin IX) group covalently per heterodimer.</text>
</comment>
<comment type="pathway">
    <text>Hormone biosynthesis; thyroid hormone biosynthesis.</text>
</comment>
<comment type="subunit">
    <text evidence="1">Interacts with DUOX1, DUOX2 and CYBA.</text>
</comment>
<comment type="subcellular location">
    <subcellularLocation>
        <location evidence="1">Membrane</location>
        <topology evidence="1">Single-pass type I membrane protein</topology>
    </subcellularLocation>
</comment>
<comment type="PTM">
    <text evidence="1">Heme is covalently bound through a H(2)O(2)-dependent autocatalytic process. Heme insertion is important for the delivery of protein at the cell surface (By similarity).</text>
</comment>
<comment type="PTM">
    <text evidence="1">Cleaved in its N-terminal part.</text>
</comment>
<comment type="PTM">
    <text evidence="7">N-glycosylated; contains mannose and N-acetylglucosamine.</text>
</comment>
<comment type="similarity">
    <text evidence="4">Belongs to the peroxidase family. XPO subfamily.</text>
</comment>
<name>PERT_PIG</name>
<accession>P09933</accession>
<protein>
    <recommendedName>
        <fullName>Thyroid peroxidase</fullName>
        <shortName>TPO</shortName>
        <ecNumber evidence="6 8 9">1.11.1.8</ecNumber>
    </recommendedName>
</protein>
<dbReference type="EC" id="1.11.1.8" evidence="6 8 9"/>
<dbReference type="EMBL" id="X04645">
    <property type="protein sequence ID" value="CAA28306.1"/>
    <property type="molecule type" value="mRNA"/>
</dbReference>
<dbReference type="PIR" id="A27416">
    <property type="entry name" value="OPPGIT"/>
</dbReference>
<dbReference type="SMR" id="P09933"/>
<dbReference type="FunCoup" id="P09933">
    <property type="interactions" value="134"/>
</dbReference>
<dbReference type="STRING" id="9823.ENSSSCP00000074299"/>
<dbReference type="PeroxiBase" id="3329">
    <property type="entry name" value="SscTPO"/>
</dbReference>
<dbReference type="GlyCosmos" id="P09933">
    <property type="glycosylation" value="4 sites, No reported glycans"/>
</dbReference>
<dbReference type="GlyGen" id="P09933">
    <property type="glycosylation" value="6 sites"/>
</dbReference>
<dbReference type="iPTMnet" id="P09933"/>
<dbReference type="PaxDb" id="9823-ENSSSCP00000025583"/>
<dbReference type="eggNOG" id="KOG2408">
    <property type="taxonomic scope" value="Eukaryota"/>
</dbReference>
<dbReference type="InParanoid" id="P09933"/>
<dbReference type="BioCyc" id="MetaCyc:MONOMER-14809"/>
<dbReference type="BRENDA" id="1.11.1.8">
    <property type="organism ID" value="6170"/>
</dbReference>
<dbReference type="UniPathway" id="UPA00194"/>
<dbReference type="Proteomes" id="UP000008227">
    <property type="component" value="Unplaced"/>
</dbReference>
<dbReference type="Proteomes" id="UP000314985">
    <property type="component" value="Unplaced"/>
</dbReference>
<dbReference type="Proteomes" id="UP000694570">
    <property type="component" value="Unplaced"/>
</dbReference>
<dbReference type="Proteomes" id="UP000694571">
    <property type="component" value="Unplaced"/>
</dbReference>
<dbReference type="Proteomes" id="UP000694720">
    <property type="component" value="Unplaced"/>
</dbReference>
<dbReference type="Proteomes" id="UP000694722">
    <property type="component" value="Unplaced"/>
</dbReference>
<dbReference type="Proteomes" id="UP000694723">
    <property type="component" value="Unplaced"/>
</dbReference>
<dbReference type="Proteomes" id="UP000694724">
    <property type="component" value="Unplaced"/>
</dbReference>
<dbReference type="Proteomes" id="UP000694725">
    <property type="component" value="Unplaced"/>
</dbReference>
<dbReference type="Proteomes" id="UP000694726">
    <property type="component" value="Unplaced"/>
</dbReference>
<dbReference type="Proteomes" id="UP000694727">
    <property type="component" value="Unplaced"/>
</dbReference>
<dbReference type="Proteomes" id="UP000694728">
    <property type="component" value="Unplaced"/>
</dbReference>
<dbReference type="GO" id="GO:0005615">
    <property type="term" value="C:extracellular space"/>
    <property type="evidence" value="ECO:0000318"/>
    <property type="project" value="GO_Central"/>
</dbReference>
<dbReference type="GO" id="GO:0016020">
    <property type="term" value="C:membrane"/>
    <property type="evidence" value="ECO:0007669"/>
    <property type="project" value="UniProtKB-SubCell"/>
</dbReference>
<dbReference type="GO" id="GO:0005509">
    <property type="term" value="F:calcium ion binding"/>
    <property type="evidence" value="ECO:0007669"/>
    <property type="project" value="InterPro"/>
</dbReference>
<dbReference type="GO" id="GO:0020037">
    <property type="term" value="F:heme binding"/>
    <property type="evidence" value="ECO:0007669"/>
    <property type="project" value="InterPro"/>
</dbReference>
<dbReference type="GO" id="GO:0004447">
    <property type="term" value="F:iodide peroxidase activity"/>
    <property type="evidence" value="ECO:0000314"/>
    <property type="project" value="UniProtKB"/>
</dbReference>
<dbReference type="GO" id="GO:0004601">
    <property type="term" value="F:peroxidase activity"/>
    <property type="evidence" value="ECO:0000318"/>
    <property type="project" value="GO_Central"/>
</dbReference>
<dbReference type="GO" id="GO:0042446">
    <property type="term" value="P:hormone biosynthetic process"/>
    <property type="evidence" value="ECO:0007669"/>
    <property type="project" value="UniProtKB-KW"/>
</dbReference>
<dbReference type="GO" id="GO:0042744">
    <property type="term" value="P:hydrogen peroxide catabolic process"/>
    <property type="evidence" value="ECO:0007669"/>
    <property type="project" value="UniProtKB-KW"/>
</dbReference>
<dbReference type="GO" id="GO:0006979">
    <property type="term" value="P:response to oxidative stress"/>
    <property type="evidence" value="ECO:0007669"/>
    <property type="project" value="InterPro"/>
</dbReference>
<dbReference type="GO" id="GO:0006590">
    <property type="term" value="P:thyroid hormone generation"/>
    <property type="evidence" value="ECO:0000314"/>
    <property type="project" value="UniProtKB"/>
</dbReference>
<dbReference type="CDD" id="cd00033">
    <property type="entry name" value="CCP"/>
    <property type="match status" value="1"/>
</dbReference>
<dbReference type="CDD" id="cd00054">
    <property type="entry name" value="EGF_CA"/>
    <property type="match status" value="1"/>
</dbReference>
<dbReference type="CDD" id="cd09825">
    <property type="entry name" value="thyroid_peroxidase"/>
    <property type="match status" value="1"/>
</dbReference>
<dbReference type="FunFam" id="1.10.640.10:FF:000010">
    <property type="entry name" value="Thyroid peroxidase"/>
    <property type="match status" value="1"/>
</dbReference>
<dbReference type="FunFam" id="1.10.640.10:FF:000013">
    <property type="entry name" value="Thyroid peroxidase"/>
    <property type="match status" value="1"/>
</dbReference>
<dbReference type="Gene3D" id="2.10.70.10">
    <property type="entry name" value="Complement Module, domain 1"/>
    <property type="match status" value="1"/>
</dbReference>
<dbReference type="Gene3D" id="1.10.640.10">
    <property type="entry name" value="Haem peroxidase domain superfamily, animal type"/>
    <property type="match status" value="1"/>
</dbReference>
<dbReference type="Gene3D" id="2.10.25.10">
    <property type="entry name" value="Laminin"/>
    <property type="match status" value="1"/>
</dbReference>
<dbReference type="InterPro" id="IPR001881">
    <property type="entry name" value="EGF-like_Ca-bd_dom"/>
</dbReference>
<dbReference type="InterPro" id="IPR000742">
    <property type="entry name" value="EGF-like_dom"/>
</dbReference>
<dbReference type="InterPro" id="IPR019791">
    <property type="entry name" value="Haem_peroxidase_animal"/>
</dbReference>
<dbReference type="InterPro" id="IPR010255">
    <property type="entry name" value="Haem_peroxidase_sf"/>
</dbReference>
<dbReference type="InterPro" id="IPR037120">
    <property type="entry name" value="Haem_peroxidase_sf_animal"/>
</dbReference>
<dbReference type="InterPro" id="IPR035976">
    <property type="entry name" value="Sushi/SCR/CCP_sf"/>
</dbReference>
<dbReference type="InterPro" id="IPR000436">
    <property type="entry name" value="Sushi_SCR_CCP_dom"/>
</dbReference>
<dbReference type="InterPro" id="IPR029589">
    <property type="entry name" value="TPO"/>
</dbReference>
<dbReference type="PANTHER" id="PTHR11475">
    <property type="entry name" value="OXIDASE/PEROXIDASE"/>
    <property type="match status" value="1"/>
</dbReference>
<dbReference type="PANTHER" id="PTHR11475:SF60">
    <property type="entry name" value="THYROID PEROXIDASE"/>
    <property type="match status" value="1"/>
</dbReference>
<dbReference type="Pfam" id="PF03098">
    <property type="entry name" value="An_peroxidase"/>
    <property type="match status" value="1"/>
</dbReference>
<dbReference type="Pfam" id="PF00084">
    <property type="entry name" value="Sushi"/>
    <property type="match status" value="1"/>
</dbReference>
<dbReference type="PRINTS" id="PR00457">
    <property type="entry name" value="ANPEROXIDASE"/>
</dbReference>
<dbReference type="SMART" id="SM00032">
    <property type="entry name" value="CCP"/>
    <property type="match status" value="1"/>
</dbReference>
<dbReference type="SMART" id="SM00179">
    <property type="entry name" value="EGF_CA"/>
    <property type="match status" value="1"/>
</dbReference>
<dbReference type="SUPFAM" id="SSF57535">
    <property type="entry name" value="Complement control module/SCR domain"/>
    <property type="match status" value="1"/>
</dbReference>
<dbReference type="SUPFAM" id="SSF57196">
    <property type="entry name" value="EGF/Laminin"/>
    <property type="match status" value="1"/>
</dbReference>
<dbReference type="SUPFAM" id="SSF48113">
    <property type="entry name" value="Heme-dependent peroxidases"/>
    <property type="match status" value="1"/>
</dbReference>
<dbReference type="PROSITE" id="PS50026">
    <property type="entry name" value="EGF_3"/>
    <property type="match status" value="1"/>
</dbReference>
<dbReference type="PROSITE" id="PS00435">
    <property type="entry name" value="PEROXIDASE_1"/>
    <property type="match status" value="1"/>
</dbReference>
<dbReference type="PROSITE" id="PS50292">
    <property type="entry name" value="PEROXIDASE_3"/>
    <property type="match status" value="1"/>
</dbReference>
<dbReference type="PROSITE" id="PS50923">
    <property type="entry name" value="SUSHI"/>
    <property type="match status" value="1"/>
</dbReference>